<comment type="function">
    <text evidence="1">With S4 and S12 plays an important role in translational accuracy.</text>
</comment>
<comment type="function">
    <text evidence="1">Located at the back of the 30S subunit body where it stabilizes the conformation of the head with respect to the body.</text>
</comment>
<comment type="subunit">
    <text evidence="1">Part of the 30S ribosomal subunit. Contacts proteins S4 and S8.</text>
</comment>
<comment type="domain">
    <text>The N-terminal domain interacts with the head of the 30S subunit; the C-terminal domain interacts with the body and contacts protein S4. The interaction surface between S4 and S5 is involved in control of translational fidelity.</text>
</comment>
<comment type="similarity">
    <text evidence="1">Belongs to the universal ribosomal protein uS5 family.</text>
</comment>
<dbReference type="EMBL" id="CP000325">
    <property type="protein sequence ID" value="ABL03451.1"/>
    <property type="molecule type" value="Genomic_DNA"/>
</dbReference>
<dbReference type="RefSeq" id="WP_011739076.1">
    <property type="nucleotide sequence ID" value="NC_008611.1"/>
</dbReference>
<dbReference type="SMR" id="A0PM82"/>
<dbReference type="KEGG" id="mul:MUL_0811"/>
<dbReference type="eggNOG" id="COG0098">
    <property type="taxonomic scope" value="Bacteria"/>
</dbReference>
<dbReference type="HOGENOM" id="CLU_065898_1_1_11"/>
<dbReference type="Proteomes" id="UP000000765">
    <property type="component" value="Chromosome"/>
</dbReference>
<dbReference type="GO" id="GO:0015935">
    <property type="term" value="C:small ribosomal subunit"/>
    <property type="evidence" value="ECO:0007669"/>
    <property type="project" value="InterPro"/>
</dbReference>
<dbReference type="GO" id="GO:0019843">
    <property type="term" value="F:rRNA binding"/>
    <property type="evidence" value="ECO:0007669"/>
    <property type="project" value="UniProtKB-UniRule"/>
</dbReference>
<dbReference type="GO" id="GO:0003735">
    <property type="term" value="F:structural constituent of ribosome"/>
    <property type="evidence" value="ECO:0007669"/>
    <property type="project" value="InterPro"/>
</dbReference>
<dbReference type="GO" id="GO:0006412">
    <property type="term" value="P:translation"/>
    <property type="evidence" value="ECO:0007669"/>
    <property type="project" value="UniProtKB-UniRule"/>
</dbReference>
<dbReference type="FunFam" id="3.30.160.20:FF:000001">
    <property type="entry name" value="30S ribosomal protein S5"/>
    <property type="match status" value="1"/>
</dbReference>
<dbReference type="FunFam" id="3.30.230.10:FF:000002">
    <property type="entry name" value="30S ribosomal protein S5"/>
    <property type="match status" value="1"/>
</dbReference>
<dbReference type="Gene3D" id="3.30.160.20">
    <property type="match status" value="1"/>
</dbReference>
<dbReference type="Gene3D" id="3.30.230.10">
    <property type="match status" value="1"/>
</dbReference>
<dbReference type="HAMAP" id="MF_01307_B">
    <property type="entry name" value="Ribosomal_uS5_B"/>
    <property type="match status" value="1"/>
</dbReference>
<dbReference type="InterPro" id="IPR020568">
    <property type="entry name" value="Ribosomal_Su5_D2-typ_SF"/>
</dbReference>
<dbReference type="InterPro" id="IPR000851">
    <property type="entry name" value="Ribosomal_uS5"/>
</dbReference>
<dbReference type="InterPro" id="IPR005712">
    <property type="entry name" value="Ribosomal_uS5_bac-type"/>
</dbReference>
<dbReference type="InterPro" id="IPR005324">
    <property type="entry name" value="Ribosomal_uS5_C"/>
</dbReference>
<dbReference type="InterPro" id="IPR013810">
    <property type="entry name" value="Ribosomal_uS5_N"/>
</dbReference>
<dbReference type="InterPro" id="IPR018192">
    <property type="entry name" value="Ribosomal_uS5_N_CS"/>
</dbReference>
<dbReference type="InterPro" id="IPR014721">
    <property type="entry name" value="Ribsml_uS5_D2-typ_fold_subgr"/>
</dbReference>
<dbReference type="NCBIfam" id="TIGR01021">
    <property type="entry name" value="rpsE_bact"/>
    <property type="match status" value="1"/>
</dbReference>
<dbReference type="PANTHER" id="PTHR48277">
    <property type="entry name" value="MITOCHONDRIAL RIBOSOMAL PROTEIN S5"/>
    <property type="match status" value="1"/>
</dbReference>
<dbReference type="PANTHER" id="PTHR48277:SF1">
    <property type="entry name" value="MITOCHONDRIAL RIBOSOMAL PROTEIN S5"/>
    <property type="match status" value="1"/>
</dbReference>
<dbReference type="Pfam" id="PF00333">
    <property type="entry name" value="Ribosomal_S5"/>
    <property type="match status" value="1"/>
</dbReference>
<dbReference type="Pfam" id="PF03719">
    <property type="entry name" value="Ribosomal_S5_C"/>
    <property type="match status" value="1"/>
</dbReference>
<dbReference type="SUPFAM" id="SSF54768">
    <property type="entry name" value="dsRNA-binding domain-like"/>
    <property type="match status" value="1"/>
</dbReference>
<dbReference type="SUPFAM" id="SSF54211">
    <property type="entry name" value="Ribosomal protein S5 domain 2-like"/>
    <property type="match status" value="1"/>
</dbReference>
<dbReference type="PROSITE" id="PS00585">
    <property type="entry name" value="RIBOSOMAL_S5"/>
    <property type="match status" value="1"/>
</dbReference>
<dbReference type="PROSITE" id="PS50881">
    <property type="entry name" value="S5_DSRBD"/>
    <property type="match status" value="1"/>
</dbReference>
<feature type="chain" id="PRO_1000086031" description="Small ribosomal subunit protein uS5">
    <location>
        <begin position="1"/>
        <end position="224"/>
    </location>
</feature>
<feature type="domain" description="S5 DRBM" evidence="1">
    <location>
        <begin position="41"/>
        <end position="104"/>
    </location>
</feature>
<feature type="region of interest" description="Disordered" evidence="2">
    <location>
        <begin position="1"/>
        <end position="38"/>
    </location>
</feature>
<feature type="compositionally biased region" description="Basic and acidic residues" evidence="2">
    <location>
        <begin position="13"/>
        <end position="38"/>
    </location>
</feature>
<proteinExistence type="inferred from homology"/>
<evidence type="ECO:0000255" key="1">
    <source>
        <dbReference type="HAMAP-Rule" id="MF_01307"/>
    </source>
</evidence>
<evidence type="ECO:0000256" key="2">
    <source>
        <dbReference type="SAM" id="MobiDB-lite"/>
    </source>
</evidence>
<evidence type="ECO:0000305" key="3"/>
<reference key="1">
    <citation type="journal article" date="2007" name="Genome Res.">
        <title>Reductive evolution and niche adaptation inferred from the genome of Mycobacterium ulcerans, the causative agent of Buruli ulcer.</title>
        <authorList>
            <person name="Stinear T.P."/>
            <person name="Seemann T."/>
            <person name="Pidot S."/>
            <person name="Frigui W."/>
            <person name="Reysset G."/>
            <person name="Garnier T."/>
            <person name="Meurice G."/>
            <person name="Simon D."/>
            <person name="Bouchier C."/>
            <person name="Ma L."/>
            <person name="Tichit M."/>
            <person name="Porter J.L."/>
            <person name="Ryan J."/>
            <person name="Johnson P.D.R."/>
            <person name="Davies J.K."/>
            <person name="Jenkin G.A."/>
            <person name="Small P.L.C."/>
            <person name="Jones L.M."/>
            <person name="Tekaia F."/>
            <person name="Laval F."/>
            <person name="Daffe M."/>
            <person name="Parkhill J."/>
            <person name="Cole S.T."/>
        </authorList>
    </citation>
    <scope>NUCLEOTIDE SEQUENCE [LARGE SCALE GENOMIC DNA]</scope>
    <source>
        <strain>Agy99</strain>
    </source>
</reference>
<protein>
    <recommendedName>
        <fullName evidence="1">Small ribosomal subunit protein uS5</fullName>
    </recommendedName>
    <alternativeName>
        <fullName evidence="3">30S ribosomal protein S5</fullName>
    </alternativeName>
</protein>
<keyword id="KW-0687">Ribonucleoprotein</keyword>
<keyword id="KW-0689">Ribosomal protein</keyword>
<keyword id="KW-0694">RNA-binding</keyword>
<keyword id="KW-0699">rRNA-binding</keyword>
<accession>A0PM82</accession>
<gene>
    <name evidence="1" type="primary">rpsE</name>
    <name type="ordered locus">MUL_0811</name>
</gene>
<organism>
    <name type="scientific">Mycobacterium ulcerans (strain Agy99)</name>
    <dbReference type="NCBI Taxonomy" id="362242"/>
    <lineage>
        <taxon>Bacteria</taxon>
        <taxon>Bacillati</taxon>
        <taxon>Actinomycetota</taxon>
        <taxon>Actinomycetes</taxon>
        <taxon>Mycobacteriales</taxon>
        <taxon>Mycobacteriaceae</taxon>
        <taxon>Mycobacterium</taxon>
        <taxon>Mycobacterium ulcerans group</taxon>
    </lineage>
</organism>
<sequence length="224" mass="22935">MAEQSAGGQGAPEGRDSRDSREGRGRRDGGRGGRDSDKSNYLERVVAINRVSKVVKGGRRFSFTALVIVGDGNGMVGVGYGKAKEVPAAIAKGVEEARKGFFRVPLIGGTITHPVQGEAAAGVVLLRPASPGTGVLAGGAARAVLECAGVHDILAKSLGSDNAINVVHATVAALKMLQRPEEVAARRGLPIEDVAPAGMLKARRESEALAAAAVREAQTSGAQP</sequence>
<name>RS5_MYCUA</name>